<name>CHR23_ARATH</name>
<organism>
    <name type="scientific">Arabidopsis thaliana</name>
    <name type="common">Mouse-ear cress</name>
    <dbReference type="NCBI Taxonomy" id="3702"/>
    <lineage>
        <taxon>Eukaryota</taxon>
        <taxon>Viridiplantae</taxon>
        <taxon>Streptophyta</taxon>
        <taxon>Embryophyta</taxon>
        <taxon>Tracheophyta</taxon>
        <taxon>Spermatophyta</taxon>
        <taxon>Magnoliopsida</taxon>
        <taxon>eudicotyledons</taxon>
        <taxon>Gunneridae</taxon>
        <taxon>Pentapetalae</taxon>
        <taxon>rosids</taxon>
        <taxon>malvids</taxon>
        <taxon>Brassicales</taxon>
        <taxon>Brassicaceae</taxon>
        <taxon>Camelineae</taxon>
        <taxon>Arabidopsis</taxon>
    </lineage>
</organism>
<comment type="function">
    <text evidence="4 5 6">Probable chromatin-remodeling factor that is functionally redundant with CHR12 in root and shoot stem cell initiation and root apical meristem (RAM) and shoot apical meristem (SAM) maintenance. Can associate with the promoter region of WOX5 (PubMed:23062007). May promote seed maturation and repress initiation of germination (PubMed:24839909). May repress plant growth (PubMed:24666886).</text>
</comment>
<comment type="catalytic activity">
    <reaction>
        <text>ATP + H2O = ADP + phosphate + H(+)</text>
        <dbReference type="Rhea" id="RHEA:13065"/>
        <dbReference type="ChEBI" id="CHEBI:15377"/>
        <dbReference type="ChEBI" id="CHEBI:15378"/>
        <dbReference type="ChEBI" id="CHEBI:30616"/>
        <dbReference type="ChEBI" id="CHEBI:43474"/>
        <dbReference type="ChEBI" id="CHEBI:456216"/>
        <dbReference type="EC" id="3.6.4.12"/>
    </reaction>
</comment>
<comment type="subcellular location">
    <subcellularLocation>
        <location evidence="4">Nucleus</location>
    </subcellularLocation>
</comment>
<comment type="tissue specificity">
    <text evidence="4">Expressed in embryos, root apical meristem (RAM) and shoot apical meristem (SAM).</text>
</comment>
<comment type="disruption phenotype">
    <text evidence="4">No visible phenotype under normal growth conditions, but double mutant plants chr12 and chr23 are embryonic lethal.</text>
</comment>
<comment type="similarity">
    <text evidence="10">Belongs to the helicase family.</text>
</comment>
<evidence type="ECO:0000255" key="1">
    <source>
        <dbReference type="PROSITE-ProRule" id="PRU00541"/>
    </source>
</evidence>
<evidence type="ECO:0000255" key="2">
    <source>
        <dbReference type="PROSITE-ProRule" id="PRU00542"/>
    </source>
</evidence>
<evidence type="ECO:0000256" key="3">
    <source>
        <dbReference type="SAM" id="MobiDB-lite"/>
    </source>
</evidence>
<evidence type="ECO:0000269" key="4">
    <source>
    </source>
</evidence>
<evidence type="ECO:0000269" key="5">
    <source>
    </source>
</evidence>
<evidence type="ECO:0000269" key="6">
    <source>
    </source>
</evidence>
<evidence type="ECO:0000303" key="7">
    <source>
    </source>
</evidence>
<evidence type="ECO:0000303" key="8">
    <source>
    </source>
</evidence>
<evidence type="ECO:0000303" key="9">
    <source>
    </source>
</evidence>
<evidence type="ECO:0000305" key="10"/>
<protein>
    <recommendedName>
        <fullName>Probable ATP-dependent DNA helicase CHR23</fullName>
        <ecNumber>3.6.4.12</ecNumber>
    </recommendedName>
    <alternativeName>
        <fullName evidence="7">Protein CHROMATIN REMODELING 23</fullName>
        <shortName evidence="9">AtCHR23</shortName>
    </alternativeName>
    <alternativeName>
        <fullName evidence="8">Protein MINUSCULE 2</fullName>
    </alternativeName>
</protein>
<sequence length="1064" mass="122887">MVKQLQEQEENDPVEKTKSLISALNYLSRDLLLPSHLYASVSSIYHASVSDLSPSPPLRGNSYTPNRGDLMSEFEDALLQQRLNYESGSRLAELKETRYKNRIHNRLSQLEGLPSNRGEDLQEKCLLELYGLKLQELQCRVRGEVSAEYWLRLNCADPERQLYDWGMMRLPRRMYGVGDSFVMEADDQFRNKRDAERLLRLEEEEKNLIETTQRKFFAEVLNAVREFQLQIQASHRRCKQRNDGVQAWHGKQRQRATRAEKLRIMALKSDDQEEYMKLAKESKNEKLTLFLEETNKIFVSLGAAVQRQKDAKLSENTKLLKGSESDLSDVDAPEDVLPAQDIEIIDSDNNDDSNDLLEGERQFNLAIHSIQEKVTKQPSLLQGGELRSYQLEGLQWMVSLYNNDYNGILADEMGLGKTIQTIALIAYLLESKDLHGPHLILAPKAVLPNWENEFALWAPSISAFLYDGSKEKRTEIRARIAGGKFNVLITHYDLIMRDKAFLKKIDWNYMIVDEGHRLKNHECALAKTLGTGYRIKRRLLLTGTPIQNSLQELWSLLNFLLPHIFNSIHNFEEWFNTPFAECGSASLTDEEELLIINRLHHVIRPFLLRRKKSEVEKFLPGKTQVILKCDMSAWQKLYYKQVTDVGRVGLHSGNGKSKSLQNLTMQLRKCCNHPYLFVGADYNMCKKPEIVRASGKFELLDRLLPKLKKAGHRILLFSQMTRLIDLLEIYLSLNDYMYLRLDGSTKTDQRGILLKQFNEPDSPYFMFLLSTRAGGLGLNLQTADTIIIFDSDWNPQMDQQAEDRAHRIGQKKEVRVFVLVSIGSIEEVILERAKQKMGIDAKVIQAGLFNTTSTAQDRREMLEEIMSKGTSSLGEDVPSEREINRLAARTEEEFWMFEQMDEERRKKENYKTRLMEEKEVPEWAYTSETQEDKTNAKNHFGSLTGKRKRKEAVYSDSLSDLQWMKAMESEDEDASKVSQKRKRTDTKTRMSNGSKAEAVLSESDEEKEEEEEERKEESGKESEEENEKPLHSWKTNKKKRSRYPVMTSSPNSRGKGSSKGSKRN</sequence>
<reference key="1">
    <citation type="journal article" date="2000" name="Nature">
        <title>Sequence and analysis of chromosome 5 of the plant Arabidopsis thaliana.</title>
        <authorList>
            <person name="Tabata S."/>
            <person name="Kaneko T."/>
            <person name="Nakamura Y."/>
            <person name="Kotani H."/>
            <person name="Kato T."/>
            <person name="Asamizu E."/>
            <person name="Miyajima N."/>
            <person name="Sasamoto S."/>
            <person name="Kimura T."/>
            <person name="Hosouchi T."/>
            <person name="Kawashima K."/>
            <person name="Kohara M."/>
            <person name="Matsumoto M."/>
            <person name="Matsuno A."/>
            <person name="Muraki A."/>
            <person name="Nakayama S."/>
            <person name="Nakazaki N."/>
            <person name="Naruo K."/>
            <person name="Okumura S."/>
            <person name="Shinpo S."/>
            <person name="Takeuchi C."/>
            <person name="Wada T."/>
            <person name="Watanabe A."/>
            <person name="Yamada M."/>
            <person name="Yasuda M."/>
            <person name="Sato S."/>
            <person name="de la Bastide M."/>
            <person name="Huang E."/>
            <person name="Spiegel L."/>
            <person name="Gnoj L."/>
            <person name="O'Shaughnessy A."/>
            <person name="Preston R."/>
            <person name="Habermann K."/>
            <person name="Murray J."/>
            <person name="Johnson D."/>
            <person name="Rohlfing T."/>
            <person name="Nelson J."/>
            <person name="Stoneking T."/>
            <person name="Pepin K."/>
            <person name="Spieth J."/>
            <person name="Sekhon M."/>
            <person name="Armstrong J."/>
            <person name="Becker M."/>
            <person name="Belter E."/>
            <person name="Cordum H."/>
            <person name="Cordes M."/>
            <person name="Courtney L."/>
            <person name="Courtney W."/>
            <person name="Dante M."/>
            <person name="Du H."/>
            <person name="Edwards J."/>
            <person name="Fryman J."/>
            <person name="Haakensen B."/>
            <person name="Lamar E."/>
            <person name="Latreille P."/>
            <person name="Leonard S."/>
            <person name="Meyer R."/>
            <person name="Mulvaney E."/>
            <person name="Ozersky P."/>
            <person name="Riley A."/>
            <person name="Strowmatt C."/>
            <person name="Wagner-McPherson C."/>
            <person name="Wollam A."/>
            <person name="Yoakum M."/>
            <person name="Bell M."/>
            <person name="Dedhia N."/>
            <person name="Parnell L."/>
            <person name="Shah R."/>
            <person name="Rodriguez M."/>
            <person name="Hoon See L."/>
            <person name="Vil D."/>
            <person name="Baker J."/>
            <person name="Kirchoff K."/>
            <person name="Toth K."/>
            <person name="King L."/>
            <person name="Bahret A."/>
            <person name="Miller B."/>
            <person name="Marra M.A."/>
            <person name="Martienssen R."/>
            <person name="McCombie W.R."/>
            <person name="Wilson R.K."/>
            <person name="Murphy G."/>
            <person name="Bancroft I."/>
            <person name="Volckaert G."/>
            <person name="Wambutt R."/>
            <person name="Duesterhoeft A."/>
            <person name="Stiekema W."/>
            <person name="Pohl T."/>
            <person name="Entian K.-D."/>
            <person name="Terryn N."/>
            <person name="Hartley N."/>
            <person name="Bent E."/>
            <person name="Johnson S."/>
            <person name="Langham S.-A."/>
            <person name="McCullagh B."/>
            <person name="Robben J."/>
            <person name="Grymonprez B."/>
            <person name="Zimmermann W."/>
            <person name="Ramsperger U."/>
            <person name="Wedler H."/>
            <person name="Balke K."/>
            <person name="Wedler E."/>
            <person name="Peters S."/>
            <person name="van Staveren M."/>
            <person name="Dirkse W."/>
            <person name="Mooijman P."/>
            <person name="Klein Lankhorst R."/>
            <person name="Weitzenegger T."/>
            <person name="Bothe G."/>
            <person name="Rose M."/>
            <person name="Hauf J."/>
            <person name="Berneiser S."/>
            <person name="Hempel S."/>
            <person name="Feldpausch M."/>
            <person name="Lamberth S."/>
            <person name="Villarroel R."/>
            <person name="Gielen J."/>
            <person name="Ardiles W."/>
            <person name="Bents O."/>
            <person name="Lemcke K."/>
            <person name="Kolesov G."/>
            <person name="Mayer K.F.X."/>
            <person name="Rudd S."/>
            <person name="Schoof H."/>
            <person name="Schueller C."/>
            <person name="Zaccaria P."/>
            <person name="Mewes H.-W."/>
            <person name="Bevan M."/>
            <person name="Fransz P.F."/>
        </authorList>
    </citation>
    <scope>NUCLEOTIDE SEQUENCE [LARGE SCALE GENOMIC DNA]</scope>
    <source>
        <strain>cv. Columbia</strain>
    </source>
</reference>
<reference key="2">
    <citation type="journal article" date="2017" name="Plant J.">
        <title>Araport11: a complete reannotation of the Arabidopsis thaliana reference genome.</title>
        <authorList>
            <person name="Cheng C.Y."/>
            <person name="Krishnakumar V."/>
            <person name="Chan A.P."/>
            <person name="Thibaud-Nissen F."/>
            <person name="Schobel S."/>
            <person name="Town C.D."/>
        </authorList>
    </citation>
    <scope>GENOME REANNOTATION</scope>
    <source>
        <strain>cv. Columbia</strain>
    </source>
</reference>
<reference key="3">
    <citation type="journal article" date="2003" name="Science">
        <title>Empirical analysis of transcriptional activity in the Arabidopsis genome.</title>
        <authorList>
            <person name="Yamada K."/>
            <person name="Lim J."/>
            <person name="Dale J.M."/>
            <person name="Chen H."/>
            <person name="Shinn P."/>
            <person name="Palm C.J."/>
            <person name="Southwick A.M."/>
            <person name="Wu H.C."/>
            <person name="Kim C.J."/>
            <person name="Nguyen M."/>
            <person name="Pham P.K."/>
            <person name="Cheuk R.F."/>
            <person name="Karlin-Newmann G."/>
            <person name="Liu S.X."/>
            <person name="Lam B."/>
            <person name="Sakano H."/>
            <person name="Wu T."/>
            <person name="Yu G."/>
            <person name="Miranda M."/>
            <person name="Quach H.L."/>
            <person name="Tripp M."/>
            <person name="Chang C.H."/>
            <person name="Lee J.M."/>
            <person name="Toriumi M.J."/>
            <person name="Chan M.M."/>
            <person name="Tang C.C."/>
            <person name="Onodera C.S."/>
            <person name="Deng J.M."/>
            <person name="Akiyama K."/>
            <person name="Ansari Y."/>
            <person name="Arakawa T."/>
            <person name="Banh J."/>
            <person name="Banno F."/>
            <person name="Bowser L."/>
            <person name="Brooks S.Y."/>
            <person name="Carninci P."/>
            <person name="Chao Q."/>
            <person name="Choy N."/>
            <person name="Enju A."/>
            <person name="Goldsmith A.D."/>
            <person name="Gurjal M."/>
            <person name="Hansen N.F."/>
            <person name="Hayashizaki Y."/>
            <person name="Johnson-Hopson C."/>
            <person name="Hsuan V.W."/>
            <person name="Iida K."/>
            <person name="Karnes M."/>
            <person name="Khan S."/>
            <person name="Koesema E."/>
            <person name="Ishida J."/>
            <person name="Jiang P.X."/>
            <person name="Jones T."/>
            <person name="Kawai J."/>
            <person name="Kamiya A."/>
            <person name="Meyers C."/>
            <person name="Nakajima M."/>
            <person name="Narusaka M."/>
            <person name="Seki M."/>
            <person name="Sakurai T."/>
            <person name="Satou M."/>
            <person name="Tamse R."/>
            <person name="Vaysberg M."/>
            <person name="Wallender E.K."/>
            <person name="Wong C."/>
            <person name="Yamamura Y."/>
            <person name="Yuan S."/>
            <person name="Shinozaki K."/>
            <person name="Davis R.W."/>
            <person name="Theologis A."/>
            <person name="Ecker J.R."/>
        </authorList>
    </citation>
    <scope>NUCLEOTIDE SEQUENCE [LARGE SCALE MRNA] OF 1-612</scope>
    <source>
        <strain>cv. Columbia</strain>
    </source>
</reference>
<reference key="4">
    <citation type="journal article" date="2006" name="Genetics">
        <title>Involvement of the Arabidopsis SWI2/SNF2 chromatin remodeling gene family in DNA damage response and recombination.</title>
        <authorList>
            <person name="Shaked H."/>
            <person name="Avivi-Ragolsky N."/>
            <person name="Levy A.A."/>
        </authorList>
    </citation>
    <scope>GENE FAMILY</scope>
    <scope>NOMENCLATURE</scope>
</reference>
<reference key="5">
    <citation type="journal article" date="2012" name="Plant J.">
        <title>Mutations in two non-canonical Arabidopsis SWI2/SNF2 chromatin remodeling ATPases cause embryogenesis and stem cell maintenance defects.</title>
        <authorList>
            <person name="Sang Y."/>
            <person name="Silva-Ortega C.O."/>
            <person name="Wu S."/>
            <person name="Yamaguchi N."/>
            <person name="Wu M.F."/>
            <person name="Pfluger J."/>
            <person name="Gillmor C.S."/>
            <person name="Gallagher K.L."/>
            <person name="Wagner D."/>
        </authorList>
    </citation>
    <scope>FUNCTION</scope>
    <scope>SUBCELLULAR LOCATION</scope>
    <scope>TISSUE SPECIFICITY</scope>
    <scope>DISRUPTION PHENOTYPE</scope>
</reference>
<reference key="6">
    <citation type="journal article" date="2013" name="PLoS ONE">
        <title>Genome-wide comparative in silico analysis of the RNA helicase gene family in Zea mays and Glycine max: a comparison with Arabidopsis and Oryza sativa.</title>
        <authorList>
            <person name="Xu R."/>
            <person name="Zhang S."/>
            <person name="Huang J."/>
            <person name="Zheng C."/>
        </authorList>
    </citation>
    <scope>GENE FAMILY</scope>
</reference>
<reference key="7">
    <citation type="journal article" date="2014" name="BMC Plant Biol.">
        <title>Over-expression of Arabidopsis AtCHR23 chromatin remodeling ATPase results in increased variability of growth and gene expression.</title>
        <authorList>
            <person name="Folta A."/>
            <person name="Severing E.I."/>
            <person name="Krauskopf J."/>
            <person name="van de Geest H."/>
            <person name="Verver J."/>
            <person name="Nap J.P."/>
            <person name="Mlynarova L."/>
        </authorList>
    </citation>
    <scope>FUNCTION</scope>
</reference>
<reference key="8">
    <citation type="journal article" date="2015" name="Physiol. Plantarum">
        <title>Reduced seed germination in Arabidopsis over-expressing SWI/SNF2 ATPase genes.</title>
        <authorList>
            <person name="Leeggangers H.A."/>
            <person name="Folta A."/>
            <person name="Muras A."/>
            <person name="Nap J.P."/>
            <person name="Mlynarova L."/>
        </authorList>
    </citation>
    <scope>FUNCTION</scope>
</reference>
<keyword id="KW-0067">ATP-binding</keyword>
<keyword id="KW-0156">Chromatin regulator</keyword>
<keyword id="KW-0217">Developmental protein</keyword>
<keyword id="KW-0341">Growth regulation</keyword>
<keyword id="KW-0347">Helicase</keyword>
<keyword id="KW-0378">Hydrolase</keyword>
<keyword id="KW-0547">Nucleotide-binding</keyword>
<keyword id="KW-0539">Nucleus</keyword>
<keyword id="KW-1185">Reference proteome</keyword>
<proteinExistence type="evidence at transcript level"/>
<feature type="chain" id="PRO_0000429440" description="Probable ATP-dependent DNA helicase CHR23">
    <location>
        <begin position="1"/>
        <end position="1064"/>
    </location>
</feature>
<feature type="domain" description="Helicase ATP-binding" evidence="1">
    <location>
        <begin position="398"/>
        <end position="563"/>
    </location>
</feature>
<feature type="domain" description="Helicase C-terminal" evidence="2">
    <location>
        <begin position="699"/>
        <end position="866"/>
    </location>
</feature>
<feature type="region of interest" description="Disordered" evidence="3">
    <location>
        <begin position="924"/>
        <end position="955"/>
    </location>
</feature>
<feature type="region of interest" description="Disordered" evidence="3">
    <location>
        <begin position="967"/>
        <end position="1064"/>
    </location>
</feature>
<feature type="short sequence motif" description="DEAH box">
    <location>
        <begin position="513"/>
        <end position="516"/>
    </location>
</feature>
<feature type="compositionally biased region" description="Acidic residues" evidence="3">
    <location>
        <begin position="1002"/>
        <end position="1014"/>
    </location>
</feature>
<feature type="compositionally biased region" description="Low complexity" evidence="3">
    <location>
        <begin position="1048"/>
        <end position="1064"/>
    </location>
</feature>
<feature type="binding site" evidence="1">
    <location>
        <begin position="411"/>
        <end position="418"/>
    </location>
    <ligand>
        <name>ATP</name>
        <dbReference type="ChEBI" id="CHEBI:30616"/>
    </ligand>
</feature>
<feature type="sequence conflict" description="In Ref. 3; AY080694." evidence="10" ref="3">
    <original>G</original>
    <variation>V</variation>
    <location>
        <position position="118"/>
    </location>
</feature>
<accession>F4K128</accession>
<dbReference type="EC" id="3.6.4.12"/>
<dbReference type="EMBL" id="AF296837">
    <property type="status" value="NOT_ANNOTATED_CDS"/>
    <property type="molecule type" value="Genomic_DNA"/>
</dbReference>
<dbReference type="EMBL" id="CP002688">
    <property type="protein sequence ID" value="AED92683.1"/>
    <property type="molecule type" value="Genomic_DNA"/>
</dbReference>
<dbReference type="EMBL" id="AY080694">
    <property type="status" value="NOT_ANNOTATED_CDS"/>
    <property type="molecule type" value="mRNA"/>
</dbReference>
<dbReference type="RefSeq" id="NP_197432.2">
    <property type="nucleotide sequence ID" value="NM_121936.3"/>
</dbReference>
<dbReference type="EMDB" id="EMD-40562"/>
<dbReference type="EMDB" id="EMD-40563"/>
<dbReference type="SMR" id="F4K128"/>
<dbReference type="BioGRID" id="17327">
    <property type="interactions" value="12"/>
</dbReference>
<dbReference type="ComplexPortal" id="CPX-7727">
    <property type="entry name" value="MINU1/2-associated SWI/SNF ATP-dependent chromatin remodeling complex"/>
</dbReference>
<dbReference type="FunCoup" id="F4K128">
    <property type="interactions" value="3196"/>
</dbReference>
<dbReference type="IntAct" id="F4K128">
    <property type="interactions" value="1"/>
</dbReference>
<dbReference type="STRING" id="3702.F4K128"/>
<dbReference type="iPTMnet" id="F4K128"/>
<dbReference type="PaxDb" id="3702-AT5G19310.1"/>
<dbReference type="ProteomicsDB" id="247001"/>
<dbReference type="EnsemblPlants" id="AT5G19310.1">
    <property type="protein sequence ID" value="AT5G19310.1"/>
    <property type="gene ID" value="AT5G19310"/>
</dbReference>
<dbReference type="GeneID" id="832051"/>
<dbReference type="Gramene" id="AT5G19310.1">
    <property type="protein sequence ID" value="AT5G19310.1"/>
    <property type="gene ID" value="AT5G19310"/>
</dbReference>
<dbReference type="KEGG" id="ath:AT5G19310"/>
<dbReference type="Araport" id="AT5G19310"/>
<dbReference type="TAIR" id="AT5G19310">
    <property type="gene designation" value="CHR23"/>
</dbReference>
<dbReference type="eggNOG" id="KOG0386">
    <property type="taxonomic scope" value="Eukaryota"/>
</dbReference>
<dbReference type="HOGENOM" id="CLU_000315_15_3_1"/>
<dbReference type="InParanoid" id="F4K128"/>
<dbReference type="PhylomeDB" id="F4K128"/>
<dbReference type="CD-CODE" id="4299E36E">
    <property type="entry name" value="Nucleolus"/>
</dbReference>
<dbReference type="PRO" id="PR:F4K128"/>
<dbReference type="Proteomes" id="UP000006548">
    <property type="component" value="Chromosome 5"/>
</dbReference>
<dbReference type="ExpressionAtlas" id="F4K128">
    <property type="expression patterns" value="baseline and differential"/>
</dbReference>
<dbReference type="GO" id="GO:0005634">
    <property type="term" value="C:nucleus"/>
    <property type="evidence" value="ECO:0007669"/>
    <property type="project" value="UniProtKB-SubCell"/>
</dbReference>
<dbReference type="GO" id="GO:0005524">
    <property type="term" value="F:ATP binding"/>
    <property type="evidence" value="ECO:0007669"/>
    <property type="project" value="UniProtKB-KW"/>
</dbReference>
<dbReference type="GO" id="GO:0016887">
    <property type="term" value="F:ATP hydrolysis activity"/>
    <property type="evidence" value="ECO:0007669"/>
    <property type="project" value="RHEA"/>
</dbReference>
<dbReference type="GO" id="GO:0031490">
    <property type="term" value="F:chromatin DNA binding"/>
    <property type="evidence" value="ECO:0000314"/>
    <property type="project" value="UniProtKB"/>
</dbReference>
<dbReference type="GO" id="GO:0004386">
    <property type="term" value="F:helicase activity"/>
    <property type="evidence" value="ECO:0007669"/>
    <property type="project" value="UniProtKB-KW"/>
</dbReference>
<dbReference type="GO" id="GO:0042393">
    <property type="term" value="F:histone binding"/>
    <property type="evidence" value="ECO:0007669"/>
    <property type="project" value="InterPro"/>
</dbReference>
<dbReference type="GO" id="GO:0006325">
    <property type="term" value="P:chromatin organization"/>
    <property type="evidence" value="ECO:0007669"/>
    <property type="project" value="UniProtKB-KW"/>
</dbReference>
<dbReference type="GO" id="GO:0010078">
    <property type="term" value="P:maintenance of root meristem identity"/>
    <property type="evidence" value="ECO:0000315"/>
    <property type="project" value="UniProtKB"/>
</dbReference>
<dbReference type="GO" id="GO:0010231">
    <property type="term" value="P:maintenance of seed dormancy"/>
    <property type="evidence" value="ECO:0000315"/>
    <property type="project" value="UniProtKB"/>
</dbReference>
<dbReference type="GO" id="GO:0010492">
    <property type="term" value="P:maintenance of shoot apical meristem identity"/>
    <property type="evidence" value="ECO:0000315"/>
    <property type="project" value="UniProtKB"/>
</dbReference>
<dbReference type="GO" id="GO:0009826">
    <property type="term" value="P:unidimensional cell growth"/>
    <property type="evidence" value="ECO:0000315"/>
    <property type="project" value="TAIR"/>
</dbReference>
<dbReference type="CDD" id="cd18793">
    <property type="entry name" value="SF2_C_SNF"/>
    <property type="match status" value="1"/>
</dbReference>
<dbReference type="FunFam" id="3.40.50.10810:FF:000016">
    <property type="entry name" value="Chromatin structure-remodeling complex protein SYD"/>
    <property type="match status" value="1"/>
</dbReference>
<dbReference type="FunFam" id="3.40.50.300:FF:000755">
    <property type="entry name" value="Probable ATP-dependent DNA helicase CHR12"/>
    <property type="match status" value="1"/>
</dbReference>
<dbReference type="Gene3D" id="3.40.50.300">
    <property type="entry name" value="P-loop containing nucleotide triphosphate hydrolases"/>
    <property type="match status" value="1"/>
</dbReference>
<dbReference type="Gene3D" id="3.40.50.10810">
    <property type="entry name" value="Tandem AAA-ATPase domain"/>
    <property type="match status" value="1"/>
</dbReference>
<dbReference type="InterPro" id="IPR014001">
    <property type="entry name" value="Helicase_ATP-bd"/>
</dbReference>
<dbReference type="InterPro" id="IPR001650">
    <property type="entry name" value="Helicase_C-like"/>
</dbReference>
<dbReference type="InterPro" id="IPR027417">
    <property type="entry name" value="P-loop_NTPase"/>
</dbReference>
<dbReference type="InterPro" id="IPR029295">
    <property type="entry name" value="SnAC"/>
</dbReference>
<dbReference type="InterPro" id="IPR038718">
    <property type="entry name" value="SNF2-like_sf"/>
</dbReference>
<dbReference type="InterPro" id="IPR049730">
    <property type="entry name" value="SNF2/RAD54-like_C"/>
</dbReference>
<dbReference type="InterPro" id="IPR000330">
    <property type="entry name" value="SNF2_N"/>
</dbReference>
<dbReference type="PANTHER" id="PTHR10799">
    <property type="entry name" value="SNF2/RAD54 HELICASE FAMILY"/>
    <property type="match status" value="1"/>
</dbReference>
<dbReference type="Pfam" id="PF00271">
    <property type="entry name" value="Helicase_C"/>
    <property type="match status" value="1"/>
</dbReference>
<dbReference type="Pfam" id="PF14619">
    <property type="entry name" value="SnAC"/>
    <property type="match status" value="1"/>
</dbReference>
<dbReference type="Pfam" id="PF00176">
    <property type="entry name" value="SNF2-rel_dom"/>
    <property type="match status" value="1"/>
</dbReference>
<dbReference type="SMART" id="SM00487">
    <property type="entry name" value="DEXDc"/>
    <property type="match status" value="1"/>
</dbReference>
<dbReference type="SMART" id="SM00490">
    <property type="entry name" value="HELICc"/>
    <property type="match status" value="1"/>
</dbReference>
<dbReference type="SMART" id="SM01314">
    <property type="entry name" value="SnAC"/>
    <property type="match status" value="1"/>
</dbReference>
<dbReference type="SUPFAM" id="SSF52540">
    <property type="entry name" value="P-loop containing nucleoside triphosphate hydrolases"/>
    <property type="match status" value="2"/>
</dbReference>
<dbReference type="PROSITE" id="PS51192">
    <property type="entry name" value="HELICASE_ATP_BIND_1"/>
    <property type="match status" value="1"/>
</dbReference>
<dbReference type="PROSITE" id="PS51194">
    <property type="entry name" value="HELICASE_CTER"/>
    <property type="match status" value="1"/>
</dbReference>
<gene>
    <name evidence="7" type="primary">CHR23</name>
    <name evidence="8" type="synonym">MINU2</name>
    <name type="ordered locus">At5g19310</name>
    <name type="ORF">F7K24.60</name>
</gene>